<feature type="propeptide" id="PRO_0000397330" description="Removed in mature form; by autocatalysis" evidence="1">
    <location>
        <begin position="1"/>
        <end position="9"/>
    </location>
</feature>
<feature type="chain" id="PRO_0000397331" description="Proteasome subunit beta">
    <location>
        <begin position="10"/>
        <end position="207"/>
    </location>
</feature>
<feature type="active site" description="Nucleophile" evidence="1">
    <location>
        <position position="10"/>
    </location>
</feature>
<sequence>MSNKNTFEGTTTVGITCKDGVVFASERRASMGNLVAHKVAEKIFKIDNHIAATIAGSVADAQTLMKVISAETSLYRLRNGKDISLEAAAAVSSNILHSSPAYVQTLIGGVDDTGASIYSLDAAGGMIKDTFISTGSGSTFAYGVLEDRFYEDITVEEATEVAIRAIKAATERDTFSGNGFLVANVTKDGFKMLEKEEVDAIIEKINS</sequence>
<accession>D3E0A3</accession>
<gene>
    <name evidence="1" type="primary">psmB</name>
    <name type="ordered locus">mru_1977</name>
</gene>
<dbReference type="EC" id="3.4.25.1" evidence="1"/>
<dbReference type="EMBL" id="CP001719">
    <property type="protein sequence ID" value="ADC47827.1"/>
    <property type="molecule type" value="Genomic_DNA"/>
</dbReference>
<dbReference type="RefSeq" id="WP_012956775.1">
    <property type="nucleotide sequence ID" value="NC_013790.1"/>
</dbReference>
<dbReference type="SMR" id="D3E0A3"/>
<dbReference type="STRING" id="634498.mru_1977"/>
<dbReference type="MEROPS" id="T01.002"/>
<dbReference type="GeneID" id="8771647"/>
<dbReference type="KEGG" id="mru:mru_1977"/>
<dbReference type="PATRIC" id="fig|634498.28.peg.1978"/>
<dbReference type="eggNOG" id="arCOG00970">
    <property type="taxonomic scope" value="Archaea"/>
</dbReference>
<dbReference type="HOGENOM" id="CLU_035750_7_2_2"/>
<dbReference type="OrthoDB" id="6330at2157"/>
<dbReference type="Proteomes" id="UP000008680">
    <property type="component" value="Chromosome"/>
</dbReference>
<dbReference type="GO" id="GO:0005737">
    <property type="term" value="C:cytoplasm"/>
    <property type="evidence" value="ECO:0007669"/>
    <property type="project" value="UniProtKB-SubCell"/>
</dbReference>
<dbReference type="GO" id="GO:0019774">
    <property type="term" value="C:proteasome core complex, beta-subunit complex"/>
    <property type="evidence" value="ECO:0007669"/>
    <property type="project" value="UniProtKB-UniRule"/>
</dbReference>
<dbReference type="GO" id="GO:0004298">
    <property type="term" value="F:threonine-type endopeptidase activity"/>
    <property type="evidence" value="ECO:0007669"/>
    <property type="project" value="UniProtKB-UniRule"/>
</dbReference>
<dbReference type="GO" id="GO:0010498">
    <property type="term" value="P:proteasomal protein catabolic process"/>
    <property type="evidence" value="ECO:0007669"/>
    <property type="project" value="UniProtKB-UniRule"/>
</dbReference>
<dbReference type="FunFam" id="3.60.20.10:FF:000049">
    <property type="entry name" value="Proteasome subunit beta"/>
    <property type="match status" value="1"/>
</dbReference>
<dbReference type="Gene3D" id="3.60.20.10">
    <property type="entry name" value="Glutamine Phosphoribosylpyrophosphate, subunit 1, domain 1"/>
    <property type="match status" value="1"/>
</dbReference>
<dbReference type="HAMAP" id="MF_02113_A">
    <property type="entry name" value="Proteasome_B_A"/>
    <property type="match status" value="1"/>
</dbReference>
<dbReference type="InterPro" id="IPR029055">
    <property type="entry name" value="Ntn_hydrolases_N"/>
</dbReference>
<dbReference type="InterPro" id="IPR019983">
    <property type="entry name" value="Pept_T1A_Psome_bsu_arc"/>
</dbReference>
<dbReference type="InterPro" id="IPR000243">
    <property type="entry name" value="Pept_T1A_subB"/>
</dbReference>
<dbReference type="InterPro" id="IPR016050">
    <property type="entry name" value="Proteasome_bsu_CS"/>
</dbReference>
<dbReference type="InterPro" id="IPR001353">
    <property type="entry name" value="Proteasome_sua/b"/>
</dbReference>
<dbReference type="InterPro" id="IPR023333">
    <property type="entry name" value="Proteasome_suB-type"/>
</dbReference>
<dbReference type="NCBIfam" id="TIGR03634">
    <property type="entry name" value="arc_protsome_B"/>
    <property type="match status" value="1"/>
</dbReference>
<dbReference type="PANTHER" id="PTHR32194:SF0">
    <property type="entry name" value="ATP-DEPENDENT PROTEASE SUBUNIT HSLV"/>
    <property type="match status" value="1"/>
</dbReference>
<dbReference type="PANTHER" id="PTHR32194">
    <property type="entry name" value="METALLOPROTEASE TLDD"/>
    <property type="match status" value="1"/>
</dbReference>
<dbReference type="Pfam" id="PF00227">
    <property type="entry name" value="Proteasome"/>
    <property type="match status" value="1"/>
</dbReference>
<dbReference type="PRINTS" id="PR00141">
    <property type="entry name" value="PROTEASOME"/>
</dbReference>
<dbReference type="SUPFAM" id="SSF56235">
    <property type="entry name" value="N-terminal nucleophile aminohydrolases (Ntn hydrolases)"/>
    <property type="match status" value="1"/>
</dbReference>
<dbReference type="PROSITE" id="PS00854">
    <property type="entry name" value="PROTEASOME_BETA_1"/>
    <property type="match status" value="1"/>
</dbReference>
<dbReference type="PROSITE" id="PS51476">
    <property type="entry name" value="PROTEASOME_BETA_2"/>
    <property type="match status" value="1"/>
</dbReference>
<organism>
    <name type="scientific">Methanobrevibacter ruminantium (strain ATCC 35063 / DSM 1093 / JCM 13430 / OCM 146 / M1)</name>
    <name type="common">Methanobacterium ruminantium</name>
    <dbReference type="NCBI Taxonomy" id="634498"/>
    <lineage>
        <taxon>Archaea</taxon>
        <taxon>Methanobacteriati</taxon>
        <taxon>Methanobacteriota</taxon>
        <taxon>Methanomada group</taxon>
        <taxon>Methanobacteria</taxon>
        <taxon>Methanobacteriales</taxon>
        <taxon>Methanobacteriaceae</taxon>
        <taxon>Methanobrevibacter</taxon>
    </lineage>
</organism>
<proteinExistence type="inferred from homology"/>
<protein>
    <recommendedName>
        <fullName evidence="1">Proteasome subunit beta</fullName>
        <ecNumber evidence="1">3.4.25.1</ecNumber>
    </recommendedName>
    <alternativeName>
        <fullName evidence="1">20S proteasome beta subunit</fullName>
    </alternativeName>
    <alternativeName>
        <fullName evidence="1">Proteasome core protein PsmB</fullName>
    </alternativeName>
</protein>
<comment type="function">
    <text evidence="1">Component of the proteasome core, a large protease complex with broad specificity involved in protein degradation.</text>
</comment>
<comment type="catalytic activity">
    <reaction evidence="1">
        <text>Cleavage of peptide bonds with very broad specificity.</text>
        <dbReference type="EC" id="3.4.25.1"/>
    </reaction>
</comment>
<comment type="activity regulation">
    <text evidence="1">The formation of the proteasomal ATPase PAN-20S proteasome complex, via the docking of the C-termini of PAN into the intersubunit pockets in the alpha-rings, triggers opening of the gate for substrate entry. Interconversion between the open-gate and close-gate conformations leads to a dynamic regulation of the 20S proteasome proteolysis activity.</text>
</comment>
<comment type="subunit">
    <text evidence="1">The 20S proteasome core is composed of 14 alpha and 14 beta subunits that assemble into four stacked heptameric rings, resulting in a barrel-shaped structure. The two inner rings, each composed of seven catalytic beta subunits, are sandwiched by two outer rings, each composed of seven alpha subunits. The catalytic chamber with the active sites is on the inside of the barrel. Has a gated structure, the ends of the cylinder being occluded by the N-termini of the alpha-subunits. Is capped at one or both ends by the proteasome regulatory ATPase, PAN.</text>
</comment>
<comment type="subcellular location">
    <subcellularLocation>
        <location evidence="1">Cytoplasm</location>
    </subcellularLocation>
</comment>
<comment type="similarity">
    <text evidence="1">Belongs to the peptidase T1B family.</text>
</comment>
<keyword id="KW-0068">Autocatalytic cleavage</keyword>
<keyword id="KW-0963">Cytoplasm</keyword>
<keyword id="KW-0378">Hydrolase</keyword>
<keyword id="KW-0645">Protease</keyword>
<keyword id="KW-0647">Proteasome</keyword>
<keyword id="KW-0888">Threonine protease</keyword>
<keyword id="KW-0865">Zymogen</keyword>
<evidence type="ECO:0000255" key="1">
    <source>
        <dbReference type="HAMAP-Rule" id="MF_02113"/>
    </source>
</evidence>
<reference key="1">
    <citation type="journal article" date="2010" name="PLoS ONE">
        <title>The genome sequence of the rumen methanogen Methanobrevibacter ruminantium reveals new possibilities for controlling ruminant methane emissions.</title>
        <authorList>
            <person name="Leahy S.C."/>
            <person name="Kelly W.J."/>
            <person name="Altermann E."/>
            <person name="Ronimus R.S."/>
            <person name="Yeoman C.J."/>
            <person name="Pacheco D.M."/>
            <person name="Li D."/>
            <person name="Kong Z."/>
            <person name="McTavish S."/>
            <person name="Sang C."/>
            <person name="Lambie S.C."/>
            <person name="Janssen P.H."/>
            <person name="Dey D."/>
            <person name="Attwood G.T."/>
        </authorList>
    </citation>
    <scope>NUCLEOTIDE SEQUENCE [LARGE SCALE GENOMIC DNA]</scope>
    <source>
        <strain>ATCC 35063 / DSM 1093 / JCM 13430 / OCM 146 / M1</strain>
    </source>
</reference>
<name>PSB_METRM</name>